<sequence length="398" mass="45769">MLSALGGLQRCFWAILLLALTVSLLAGFLHKDVRLLMPLLKGQAEGPPITNVMFLKTHKTASSTVLNILFRFAETHNLSVALPAGQRVHLGYPWLFLARYVEGVEEGGPEQRFNIMCNHLRFNLPEVRKVMPNDTFYFSILRNPVFQLESSFIYYKGYVPAFRDVVSLEAFLASPGTYYNESQGLRNAYARNGMWFDLGFDNNAPAEDAYVRARLADVERRFQLVLIAEHFDESMVLLRHLLRWRLDDVVSFPLNLRSPGSVTSLTPEGQERAKRWCALDWRLYQHFNRTFWARLRTELGPRRLRSEVAQLQARQRELQALCVQDGAPKNKSQITDLRLRPYQSGEADILGYSLRPGLDNQTVQLCQRMVTPELQYTARLYTQQFPEKPPKNIPFLGA</sequence>
<comment type="function">
    <text evidence="1">Transfers a sulfate group to the hydroxyl group at C3 of non-reducing beta-galactosyl residues. Acts both on type 1 (Gal-beta-1,3-GlcNAc) and type 2 (Gal-beta-1,4-GlcNAc) chains with similar efficiency (By similarity).</text>
</comment>
<comment type="activity regulation">
    <text evidence="1">Strongly inhibited by Cu(2+) and Zn(2+).</text>
</comment>
<comment type="pathway">
    <text>Protein modification; carbohydrate sulfation.</text>
</comment>
<comment type="subcellular location">
    <subcellularLocation>
        <location evidence="3">Golgi apparatus</location>
        <location evidence="3">Golgi stack membrane</location>
        <topology evidence="3">Single-pass type II membrane protein</topology>
    </subcellularLocation>
</comment>
<comment type="similarity">
    <text evidence="3">Belongs to the galactose-3-O-sulfotransferase family.</text>
</comment>
<organism>
    <name type="scientific">Sus scrofa</name>
    <name type="common">Pig</name>
    <dbReference type="NCBI Taxonomy" id="9823"/>
    <lineage>
        <taxon>Eukaryota</taxon>
        <taxon>Metazoa</taxon>
        <taxon>Chordata</taxon>
        <taxon>Craniata</taxon>
        <taxon>Vertebrata</taxon>
        <taxon>Euteleostomi</taxon>
        <taxon>Mammalia</taxon>
        <taxon>Eutheria</taxon>
        <taxon>Laurasiatheria</taxon>
        <taxon>Artiodactyla</taxon>
        <taxon>Suina</taxon>
        <taxon>Suidae</taxon>
        <taxon>Sus</taxon>
    </lineage>
</organism>
<feature type="chain" id="PRO_0000085205" description="Galactose-3-O-sulfotransferase 2">
    <location>
        <begin position="1"/>
        <end position="398"/>
    </location>
</feature>
<feature type="topological domain" description="Cytoplasmic" evidence="2">
    <location>
        <begin position="1"/>
        <end position="11"/>
    </location>
</feature>
<feature type="transmembrane region" description="Helical; Signal-anchor for type II membrane protein" evidence="2">
    <location>
        <begin position="12"/>
        <end position="29"/>
    </location>
</feature>
<feature type="topological domain" description="Lumenal" evidence="2">
    <location>
        <begin position="30"/>
        <end position="398"/>
    </location>
</feature>
<feature type="glycosylation site" description="N-linked (GlcNAc...) asparagine" evidence="2">
    <location>
        <position position="77"/>
    </location>
</feature>
<feature type="glycosylation site" description="N-linked (GlcNAc...) asparagine" evidence="2">
    <location>
        <position position="133"/>
    </location>
</feature>
<feature type="glycosylation site" description="N-linked (GlcNAc...) asparagine" evidence="2">
    <location>
        <position position="180"/>
    </location>
</feature>
<feature type="glycosylation site" description="N-linked (GlcNAc...) asparagine" evidence="2">
    <location>
        <position position="288"/>
    </location>
</feature>
<feature type="glycosylation site" description="N-linked (GlcNAc...) asparagine" evidence="2">
    <location>
        <position position="330"/>
    </location>
</feature>
<feature type="glycosylation site" description="N-linked (GlcNAc...) asparagine" evidence="2">
    <location>
        <position position="360"/>
    </location>
</feature>
<dbReference type="EC" id="2.8.2.-"/>
<dbReference type="EMBL" id="AY216523">
    <property type="protein sequence ID" value="AAP51033.1"/>
    <property type="molecule type" value="mRNA"/>
</dbReference>
<dbReference type="RefSeq" id="NP_998943.1">
    <property type="nucleotide sequence ID" value="NM_213778.1"/>
</dbReference>
<dbReference type="FunCoup" id="Q6XQG9">
    <property type="interactions" value="35"/>
</dbReference>
<dbReference type="GlyCosmos" id="Q6XQG9">
    <property type="glycosylation" value="6 sites, No reported glycans"/>
</dbReference>
<dbReference type="GlyGen" id="Q6XQG9">
    <property type="glycosylation" value="6 sites"/>
</dbReference>
<dbReference type="Ensembl" id="ENSSSCT00000106204.1">
    <property type="protein sequence ID" value="ENSSSCP00000080940.1"/>
    <property type="gene ID" value="ENSSSCG00000063392.1"/>
</dbReference>
<dbReference type="Ensembl" id="ENSSSCT00015103931.1">
    <property type="protein sequence ID" value="ENSSSCP00015043399.1"/>
    <property type="gene ID" value="ENSSSCG00015076715.1"/>
</dbReference>
<dbReference type="Ensembl" id="ENSSSCT00070008659.1">
    <property type="protein sequence ID" value="ENSSSCP00070007131.1"/>
    <property type="gene ID" value="ENSSSCG00070004586.1"/>
</dbReference>
<dbReference type="Ensembl" id="ENSSSCT00090061171">
    <property type="protein sequence ID" value="ENSSSCP00090038148"/>
    <property type="gene ID" value="ENSSSCG00090034561"/>
</dbReference>
<dbReference type="Ensembl" id="ENSSSCT00105068775">
    <property type="protein sequence ID" value="ENSSSCP00105048778"/>
    <property type="gene ID" value="ENSSSCG00105036059"/>
</dbReference>
<dbReference type="Ensembl" id="ENSSSCT00130053608">
    <property type="protein sequence ID" value="ENSSSCP00130038243"/>
    <property type="gene ID" value="ENSSSCG00130027510"/>
</dbReference>
<dbReference type="GeneID" id="396666"/>
<dbReference type="KEGG" id="ssc:396666"/>
<dbReference type="CTD" id="64090"/>
<dbReference type="GeneTree" id="ENSGT00950000182923"/>
<dbReference type="InParanoid" id="Q6XQG9"/>
<dbReference type="OrthoDB" id="514299at2759"/>
<dbReference type="UniPathway" id="UPA00353"/>
<dbReference type="Proteomes" id="UP000008227">
    <property type="component" value="Chromosome 15"/>
</dbReference>
<dbReference type="Proteomes" id="UP000314985">
    <property type="component" value="Chromosome 15"/>
</dbReference>
<dbReference type="Proteomes" id="UP000694570">
    <property type="component" value="Unplaced"/>
</dbReference>
<dbReference type="Proteomes" id="UP000694571">
    <property type="component" value="Unplaced"/>
</dbReference>
<dbReference type="Proteomes" id="UP000694720">
    <property type="component" value="Unplaced"/>
</dbReference>
<dbReference type="Proteomes" id="UP000694722">
    <property type="component" value="Unplaced"/>
</dbReference>
<dbReference type="Proteomes" id="UP000694723">
    <property type="component" value="Unplaced"/>
</dbReference>
<dbReference type="Proteomes" id="UP000694724">
    <property type="component" value="Unplaced"/>
</dbReference>
<dbReference type="Proteomes" id="UP000694725">
    <property type="component" value="Unplaced"/>
</dbReference>
<dbReference type="Proteomes" id="UP000694726">
    <property type="component" value="Unplaced"/>
</dbReference>
<dbReference type="Proteomes" id="UP000694727">
    <property type="component" value="Unplaced"/>
</dbReference>
<dbReference type="Proteomes" id="UP000694728">
    <property type="component" value="Unplaced"/>
</dbReference>
<dbReference type="GO" id="GO:0032580">
    <property type="term" value="C:Golgi cisterna membrane"/>
    <property type="evidence" value="ECO:0007669"/>
    <property type="project" value="UniProtKB-SubCell"/>
</dbReference>
<dbReference type="GO" id="GO:0050694">
    <property type="term" value="F:galactose 3-O-sulfotransferase activity"/>
    <property type="evidence" value="ECO:0000318"/>
    <property type="project" value="GO_Central"/>
</dbReference>
<dbReference type="GO" id="GO:0001733">
    <property type="term" value="F:galactosylceramide sulfotransferase activity"/>
    <property type="evidence" value="ECO:0007669"/>
    <property type="project" value="InterPro"/>
</dbReference>
<dbReference type="GO" id="GO:0009247">
    <property type="term" value="P:glycolipid biosynthetic process"/>
    <property type="evidence" value="ECO:0007669"/>
    <property type="project" value="InterPro"/>
</dbReference>
<dbReference type="GO" id="GO:0009101">
    <property type="term" value="P:glycoprotein biosynthetic process"/>
    <property type="evidence" value="ECO:0000318"/>
    <property type="project" value="GO_Central"/>
</dbReference>
<dbReference type="FunFam" id="3.40.50.300:FF:000807">
    <property type="entry name" value="galactosylceramide sulfotransferase isoform X1"/>
    <property type="match status" value="1"/>
</dbReference>
<dbReference type="Gene3D" id="3.40.50.300">
    <property type="entry name" value="P-loop containing nucleotide triphosphate hydrolases"/>
    <property type="match status" value="1"/>
</dbReference>
<dbReference type="InterPro" id="IPR009729">
    <property type="entry name" value="Gal-3-0_sulfotransfrase"/>
</dbReference>
<dbReference type="InterPro" id="IPR027417">
    <property type="entry name" value="P-loop_NTPase"/>
</dbReference>
<dbReference type="PANTHER" id="PTHR14647">
    <property type="entry name" value="GALACTOSE-3-O-SULFOTRANSFERASE"/>
    <property type="match status" value="1"/>
</dbReference>
<dbReference type="PANTHER" id="PTHR14647:SF55">
    <property type="entry name" value="GALACTOSE-3-O-SULFOTRANSFERASE 2"/>
    <property type="match status" value="1"/>
</dbReference>
<dbReference type="Pfam" id="PF06990">
    <property type="entry name" value="Gal-3-0_sulfotr"/>
    <property type="match status" value="1"/>
</dbReference>
<evidence type="ECO:0000250" key="1"/>
<evidence type="ECO:0000255" key="2"/>
<evidence type="ECO:0000305" key="3"/>
<reference key="1">
    <citation type="submission" date="2003-01" db="EMBL/GenBank/DDBJ databases">
        <authorList>
            <person name="Seko A."/>
            <person name="Yamashita K."/>
        </authorList>
    </citation>
    <scope>NUCLEOTIDE SEQUENCE [MRNA]</scope>
    <source>
        <tissue>Colon</tissue>
    </source>
</reference>
<gene>
    <name type="primary">GAL3ST2</name>
</gene>
<keyword id="KW-0325">Glycoprotein</keyword>
<keyword id="KW-0333">Golgi apparatus</keyword>
<keyword id="KW-0472">Membrane</keyword>
<keyword id="KW-1185">Reference proteome</keyword>
<keyword id="KW-0735">Signal-anchor</keyword>
<keyword id="KW-0808">Transferase</keyword>
<keyword id="KW-0812">Transmembrane</keyword>
<keyword id="KW-1133">Transmembrane helix</keyword>
<accession>Q6XQG9</accession>
<name>G3ST2_PIG</name>
<proteinExistence type="evidence at transcript level"/>
<protein>
    <recommendedName>
        <fullName>Galactose-3-O-sulfotransferase 2</fullName>
        <shortName>Gal3ST-2</shortName>
        <ecNumber>2.8.2.-</ecNumber>
    </recommendedName>
    <alternativeName>
        <fullName>Beta-galactose-3-O-sulfotransferase 2</fullName>
    </alternativeName>
    <alternativeName>
        <fullName>Gal-beta-1, 3-GalNAc 3'-sulfotransferase 2</fullName>
    </alternativeName>
</protein>